<evidence type="ECO:0000250" key="1">
    <source>
        <dbReference type="UniProtKB" id="Q9W415"/>
    </source>
</evidence>
<evidence type="ECO:0000255" key="2">
    <source>
        <dbReference type="HAMAP-Rule" id="MF_03056"/>
    </source>
</evidence>
<evidence type="ECO:0000256" key="3">
    <source>
        <dbReference type="SAM" id="MobiDB-lite"/>
    </source>
</evidence>
<accession>B4NER4</accession>
<name>WUHO_DROWI</name>
<dbReference type="EMBL" id="CH964239">
    <property type="protein sequence ID" value="EDW82233.1"/>
    <property type="molecule type" value="Genomic_DNA"/>
</dbReference>
<dbReference type="SMR" id="B4NER4"/>
<dbReference type="STRING" id="7260.B4NER4"/>
<dbReference type="EnsemblMetazoa" id="FBtr0255883">
    <property type="protein sequence ID" value="FBpp0254375"/>
    <property type="gene ID" value="FBgn0227191"/>
</dbReference>
<dbReference type="EnsemblMetazoa" id="XM_002071211.3">
    <property type="protein sequence ID" value="XP_002071247.1"/>
    <property type="gene ID" value="LOC6649234"/>
</dbReference>
<dbReference type="GeneID" id="6649234"/>
<dbReference type="KEGG" id="dwi:6649234"/>
<dbReference type="CTD" id="31566"/>
<dbReference type="eggNOG" id="KOG3914">
    <property type="taxonomic scope" value="Eukaryota"/>
</dbReference>
<dbReference type="HOGENOM" id="CLU_054270_0_0_1"/>
<dbReference type="OMA" id="SVWFKKR"/>
<dbReference type="OrthoDB" id="371245at2759"/>
<dbReference type="PhylomeDB" id="B4NER4"/>
<dbReference type="UniPathway" id="UPA00989"/>
<dbReference type="Proteomes" id="UP000007798">
    <property type="component" value="Unassembled WGS sequence"/>
</dbReference>
<dbReference type="GO" id="GO:0005829">
    <property type="term" value="C:cytosol"/>
    <property type="evidence" value="ECO:0007669"/>
    <property type="project" value="TreeGrafter"/>
</dbReference>
<dbReference type="GO" id="GO:0001674">
    <property type="term" value="C:female germ cell nucleus"/>
    <property type="evidence" value="ECO:0000250"/>
    <property type="project" value="UniProtKB"/>
</dbReference>
<dbReference type="GO" id="GO:0001673">
    <property type="term" value="C:male germ cell nucleus"/>
    <property type="evidence" value="ECO:0000250"/>
    <property type="project" value="UniProtKB"/>
</dbReference>
<dbReference type="GO" id="GO:0005634">
    <property type="term" value="C:nucleus"/>
    <property type="evidence" value="ECO:0000250"/>
    <property type="project" value="UniProtKB"/>
</dbReference>
<dbReference type="GO" id="GO:0043527">
    <property type="term" value="C:tRNA methyltransferase complex"/>
    <property type="evidence" value="ECO:0007669"/>
    <property type="project" value="TreeGrafter"/>
</dbReference>
<dbReference type="GO" id="GO:0048477">
    <property type="term" value="P:oogenesis"/>
    <property type="evidence" value="ECO:0000250"/>
    <property type="project" value="UniProtKB"/>
</dbReference>
<dbReference type="GO" id="GO:0007283">
    <property type="term" value="P:spermatogenesis"/>
    <property type="evidence" value="ECO:0000250"/>
    <property type="project" value="UniProtKB"/>
</dbReference>
<dbReference type="GO" id="GO:0106004">
    <property type="term" value="P:tRNA (guanine-N7)-methylation"/>
    <property type="evidence" value="ECO:0007669"/>
    <property type="project" value="UniProtKB-UniRule"/>
</dbReference>
<dbReference type="Gene3D" id="2.130.10.10">
    <property type="entry name" value="YVTN repeat-like/Quinoprotein amine dehydrogenase"/>
    <property type="match status" value="1"/>
</dbReference>
<dbReference type="HAMAP" id="MF_03056">
    <property type="entry name" value="TRM82"/>
    <property type="match status" value="1"/>
</dbReference>
<dbReference type="InterPro" id="IPR028884">
    <property type="entry name" value="Trm82"/>
</dbReference>
<dbReference type="InterPro" id="IPR015943">
    <property type="entry name" value="WD40/YVTN_repeat-like_dom_sf"/>
</dbReference>
<dbReference type="InterPro" id="IPR019775">
    <property type="entry name" value="WD40_repeat_CS"/>
</dbReference>
<dbReference type="InterPro" id="IPR001680">
    <property type="entry name" value="WD40_rpt"/>
</dbReference>
<dbReference type="PANTHER" id="PTHR16288:SF0">
    <property type="entry name" value="TRNA (GUANINE-N(7)-)-METHYLTRANSFERASE NON-CATALYTIC SUBUNIT WDR4"/>
    <property type="match status" value="1"/>
</dbReference>
<dbReference type="PANTHER" id="PTHR16288">
    <property type="entry name" value="WD40 REPEAT PROTEIN 4"/>
    <property type="match status" value="1"/>
</dbReference>
<dbReference type="Pfam" id="PF00400">
    <property type="entry name" value="WD40"/>
    <property type="match status" value="2"/>
</dbReference>
<dbReference type="SMART" id="SM00320">
    <property type="entry name" value="WD40"/>
    <property type="match status" value="3"/>
</dbReference>
<dbReference type="SUPFAM" id="SSF69322">
    <property type="entry name" value="Tricorn protease domain 2"/>
    <property type="match status" value="1"/>
</dbReference>
<dbReference type="PROSITE" id="PS00678">
    <property type="entry name" value="WD_REPEATS_1"/>
    <property type="match status" value="1"/>
</dbReference>
<dbReference type="PROSITE" id="PS50082">
    <property type="entry name" value="WD_REPEATS_2"/>
    <property type="match status" value="1"/>
</dbReference>
<dbReference type="PROSITE" id="PS50294">
    <property type="entry name" value="WD_REPEATS_REGION"/>
    <property type="match status" value="1"/>
</dbReference>
<proteinExistence type="inferred from homology"/>
<protein>
    <recommendedName>
        <fullName evidence="2">tRNA (guanine-N(7)-)-methyltransferase non-catalytic subunit wuho</fullName>
    </recommendedName>
</protein>
<comment type="function">
    <text evidence="1 2">Required for the Mettl1-dependent formation of N(7)-methylguanine at position 46 (m7G46) in tRNA (By similarity). In the Mettl1-wuho methyltransferase complex, it is required to stabilize and induce conformational changes of the catalytic subunit (By similarity). Required for binding of nanos mRNA and repression of translation by the mei-P26-bgcn-bam-sxl complex. May cooperate with mei-P26 and nanos to derepress the BMP signaling pathway. May cooperate with mei-P26 to suppress expression of a subset of microRNAs. May cooperate with mei-P26 to regulate bam expression levels in germline cells during gametogenesis. Required to promote mitosis to meiosis transition during gametogenesis. May regulate germline cell division in part by regulating ribosome biogenesis (By similarity).</text>
</comment>
<comment type="pathway">
    <text evidence="2">tRNA modification; N(7)-methylguanine-tRNA biosynthesis.</text>
</comment>
<comment type="subunit">
    <text evidence="1 2">Forms a heterodimer with the catalytic subunit Mettl1 (By similarity). Interacts with mei-P26 and weakly interacts with bgcn; required for the function or formation of the mei-P26-bgcn-bam-sxl complex. Interacts with nanos; may be involved in mei-P26-dependent derepression of the BMP signaling pathway. Interacts with Myc; the interaction may be mediated by mei-P26 and may be involved in the regulation of ribosome biogenesis (By similarity).</text>
</comment>
<comment type="subcellular location">
    <subcellularLocation>
        <location evidence="1 2">Nucleus</location>
    </subcellularLocation>
    <subcellularLocation>
        <location evidence="1">Cytoplasm</location>
    </subcellularLocation>
    <text evidence="1">Localized to the nuclei of nurse cells, follicle cells and oocytes at early stages, from germarium to stage 4 egg chambers. Also present in the nuclei of spermatocytes and in the apical cells of the testes. In the cytoplasm of all germline and somatic cells of the ovary.</text>
</comment>
<comment type="tissue specificity">
    <text evidence="1">In testis, it is present at high level in hub cells, a niche for germline stem cells of testis. Ubiquitously expressed in all testicular cells throughout spermatogenesis. Ubiquitously expressed in all germline and somatic cells of the ovary.</text>
</comment>
<comment type="miscellaneous">
    <text evidence="1">Wuho means 'no progeny' in Chinese.</text>
</comment>
<comment type="similarity">
    <text evidence="2">Belongs to the WD repeat TRM82 family.</text>
</comment>
<reference key="1">
    <citation type="journal article" date="2007" name="Nature">
        <title>Evolution of genes and genomes on the Drosophila phylogeny.</title>
        <authorList>
            <consortium name="Drosophila 12 genomes consortium"/>
        </authorList>
    </citation>
    <scope>NUCLEOTIDE SEQUENCE [LARGE SCALE GENOMIC DNA]</scope>
    <source>
        <strain>Tucson 14030-0811.24</strain>
    </source>
</reference>
<sequence length="419" mass="46557">MATIFYAEPELVIGHNRKILFVNPNDLQIFKEIELPTDLLSSCGLKSSSTSTAEQQSAAAETGGGSVVEGEEPKDTKTIEAGASASAPTVSVQNVSYSPDRQLLAVTTAGQKALVLYKCRPEHAQLVSVRALARASSAIRFAADSSSVLVTDKTGDCYQYDCIETEALPRLLLGHLSIVYDILWTGDQQHIITSDRDDKIRVTNYPATFDIHSYCLGHKEFVSGLALLSDEHICSVSGDKTLRVWNFKAGKELLRTDLPAPAVRLHHRQLPQKSDGDNADNLQRHQLGILFYDHVDAVGLYELEGNGDVWSVTVSQQIRADAGSWNICNFALTEERVYVMGAKDERLTFRCYNSSNGEPITSQLPEGWLTMILDQFPGDAGSCLPEDLSVWFKKRFDNVSDYLERKKRRIEEQQQQHKC</sequence>
<gene>
    <name evidence="2" type="primary">wuho</name>
    <name type="ORF">GK25232</name>
</gene>
<feature type="chain" id="PRO_0000370550" description="tRNA (guanine-N(7)-)-methyltransferase non-catalytic subunit wuho">
    <location>
        <begin position="1"/>
        <end position="419"/>
    </location>
</feature>
<feature type="repeat" description="WD 1">
    <location>
        <begin position="87"/>
        <end position="127"/>
    </location>
</feature>
<feature type="repeat" description="WD 2">
    <location>
        <begin position="174"/>
        <end position="213"/>
    </location>
</feature>
<feature type="repeat" description="WD 3">
    <location>
        <begin position="217"/>
        <end position="255"/>
    </location>
</feature>
<feature type="region of interest" description="Disordered" evidence="3">
    <location>
        <begin position="51"/>
        <end position="75"/>
    </location>
</feature>
<feature type="compositionally biased region" description="Low complexity" evidence="3">
    <location>
        <begin position="51"/>
        <end position="61"/>
    </location>
</feature>
<keyword id="KW-0963">Cytoplasm</keyword>
<keyword id="KW-0217">Developmental protein</keyword>
<keyword id="KW-0221">Differentiation</keyword>
<keyword id="KW-0539">Nucleus</keyword>
<keyword id="KW-0896">Oogenesis</keyword>
<keyword id="KW-1185">Reference proteome</keyword>
<keyword id="KW-0677">Repeat</keyword>
<keyword id="KW-0744">Spermatogenesis</keyword>
<keyword id="KW-0819">tRNA processing</keyword>
<keyword id="KW-0853">WD repeat</keyword>
<organism>
    <name type="scientific">Drosophila willistoni</name>
    <name type="common">Fruit fly</name>
    <dbReference type="NCBI Taxonomy" id="7260"/>
    <lineage>
        <taxon>Eukaryota</taxon>
        <taxon>Metazoa</taxon>
        <taxon>Ecdysozoa</taxon>
        <taxon>Arthropoda</taxon>
        <taxon>Hexapoda</taxon>
        <taxon>Insecta</taxon>
        <taxon>Pterygota</taxon>
        <taxon>Neoptera</taxon>
        <taxon>Endopterygota</taxon>
        <taxon>Diptera</taxon>
        <taxon>Brachycera</taxon>
        <taxon>Muscomorpha</taxon>
        <taxon>Ephydroidea</taxon>
        <taxon>Drosophilidae</taxon>
        <taxon>Drosophila</taxon>
        <taxon>Sophophora</taxon>
    </lineage>
</organism>